<evidence type="ECO:0000250" key="1"/>
<evidence type="ECO:0000250" key="2">
    <source>
        <dbReference type="UniProtKB" id="P24058"/>
    </source>
</evidence>
<evidence type="ECO:0000305" key="3"/>
<evidence type="ECO:0000305" key="4">
    <source>
    </source>
</evidence>
<protein>
    <recommendedName>
        <fullName>Argininosuccinate lyase</fullName>
        <shortName>ASAL</shortName>
        <ecNumber evidence="4">4.3.2.1</ecNumber>
    </recommendedName>
    <alternativeName>
        <fullName>Arginosuccinase</fullName>
    </alternativeName>
</protein>
<reference key="1">
    <citation type="journal article" date="1991" name="Curr. Genet.">
        <title>Sequence analysis of the ARG7 gene of Schizosaccharomyces pombe coding for argininosuccinate lyase. Expression of the gene in Saccharomyces cerevisiae.</title>
        <authorList>
            <person name="Loppes R."/>
            <person name="Michels R."/>
            <person name="Decroupette I."/>
            <person name="Joris B."/>
        </authorList>
    </citation>
    <scope>NUCLEOTIDE SEQUENCE [GENOMIC DNA]</scope>
    <scope>CATALYTIC ACTIVITY</scope>
    <scope>PATHWAY</scope>
</reference>
<reference key="2">
    <citation type="journal article" date="2002" name="Nature">
        <title>The genome sequence of Schizosaccharomyces pombe.</title>
        <authorList>
            <person name="Wood V."/>
            <person name="Gwilliam R."/>
            <person name="Rajandream M.A."/>
            <person name="Lyne M.H."/>
            <person name="Lyne R."/>
            <person name="Stewart A."/>
            <person name="Sgouros J.G."/>
            <person name="Peat N."/>
            <person name="Hayles J."/>
            <person name="Baker S.G."/>
            <person name="Basham D."/>
            <person name="Bowman S."/>
            <person name="Brooks K."/>
            <person name="Brown D."/>
            <person name="Brown S."/>
            <person name="Chillingworth T."/>
            <person name="Churcher C.M."/>
            <person name="Collins M."/>
            <person name="Connor R."/>
            <person name="Cronin A."/>
            <person name="Davis P."/>
            <person name="Feltwell T."/>
            <person name="Fraser A."/>
            <person name="Gentles S."/>
            <person name="Goble A."/>
            <person name="Hamlin N."/>
            <person name="Harris D.E."/>
            <person name="Hidalgo J."/>
            <person name="Hodgson G."/>
            <person name="Holroyd S."/>
            <person name="Hornsby T."/>
            <person name="Howarth S."/>
            <person name="Huckle E.J."/>
            <person name="Hunt S."/>
            <person name="Jagels K."/>
            <person name="James K.D."/>
            <person name="Jones L."/>
            <person name="Jones M."/>
            <person name="Leather S."/>
            <person name="McDonald S."/>
            <person name="McLean J."/>
            <person name="Mooney P."/>
            <person name="Moule S."/>
            <person name="Mungall K.L."/>
            <person name="Murphy L.D."/>
            <person name="Niblett D."/>
            <person name="Odell C."/>
            <person name="Oliver K."/>
            <person name="O'Neil S."/>
            <person name="Pearson D."/>
            <person name="Quail M.A."/>
            <person name="Rabbinowitsch E."/>
            <person name="Rutherford K.M."/>
            <person name="Rutter S."/>
            <person name="Saunders D."/>
            <person name="Seeger K."/>
            <person name="Sharp S."/>
            <person name="Skelton J."/>
            <person name="Simmonds M.N."/>
            <person name="Squares R."/>
            <person name="Squares S."/>
            <person name="Stevens K."/>
            <person name="Taylor K."/>
            <person name="Taylor R.G."/>
            <person name="Tivey A."/>
            <person name="Walsh S.V."/>
            <person name="Warren T."/>
            <person name="Whitehead S."/>
            <person name="Woodward J.R."/>
            <person name="Volckaert G."/>
            <person name="Aert R."/>
            <person name="Robben J."/>
            <person name="Grymonprez B."/>
            <person name="Weltjens I."/>
            <person name="Vanstreels E."/>
            <person name="Rieger M."/>
            <person name="Schaefer M."/>
            <person name="Mueller-Auer S."/>
            <person name="Gabel C."/>
            <person name="Fuchs M."/>
            <person name="Duesterhoeft A."/>
            <person name="Fritzc C."/>
            <person name="Holzer E."/>
            <person name="Moestl D."/>
            <person name="Hilbert H."/>
            <person name="Borzym K."/>
            <person name="Langer I."/>
            <person name="Beck A."/>
            <person name="Lehrach H."/>
            <person name="Reinhardt R."/>
            <person name="Pohl T.M."/>
            <person name="Eger P."/>
            <person name="Zimmermann W."/>
            <person name="Wedler H."/>
            <person name="Wambutt R."/>
            <person name="Purnelle B."/>
            <person name="Goffeau A."/>
            <person name="Cadieu E."/>
            <person name="Dreano S."/>
            <person name="Gloux S."/>
            <person name="Lelaure V."/>
            <person name="Mottier S."/>
            <person name="Galibert F."/>
            <person name="Aves S.J."/>
            <person name="Xiang Z."/>
            <person name="Hunt C."/>
            <person name="Moore K."/>
            <person name="Hurst S.M."/>
            <person name="Lucas M."/>
            <person name="Rochet M."/>
            <person name="Gaillardin C."/>
            <person name="Tallada V.A."/>
            <person name="Garzon A."/>
            <person name="Thode G."/>
            <person name="Daga R.R."/>
            <person name="Cruzado L."/>
            <person name="Jimenez J."/>
            <person name="Sanchez M."/>
            <person name="del Rey F."/>
            <person name="Benito J."/>
            <person name="Dominguez A."/>
            <person name="Revuelta J.L."/>
            <person name="Moreno S."/>
            <person name="Armstrong J."/>
            <person name="Forsburg S.L."/>
            <person name="Cerutti L."/>
            <person name="Lowe T."/>
            <person name="McCombie W.R."/>
            <person name="Paulsen I."/>
            <person name="Potashkin J."/>
            <person name="Shpakovski G.V."/>
            <person name="Ussery D."/>
            <person name="Barrell B.G."/>
            <person name="Nurse P."/>
        </authorList>
    </citation>
    <scope>NUCLEOTIDE SEQUENCE [LARGE SCALE GENOMIC DNA]</scope>
    <source>
        <strain>972 / ATCC 24843</strain>
    </source>
</reference>
<comment type="catalytic activity">
    <reaction evidence="4">
        <text>2-(N(omega)-L-arginino)succinate = fumarate + L-arginine</text>
        <dbReference type="Rhea" id="RHEA:24020"/>
        <dbReference type="ChEBI" id="CHEBI:29806"/>
        <dbReference type="ChEBI" id="CHEBI:32682"/>
        <dbReference type="ChEBI" id="CHEBI:57472"/>
        <dbReference type="EC" id="4.3.2.1"/>
    </reaction>
</comment>
<comment type="pathway">
    <text evidence="4">Amino-acid biosynthesis; L-arginine biosynthesis; L-arginine from L-ornithine and carbamoyl phosphate: step 3/3.</text>
</comment>
<comment type="subunit">
    <text evidence="1">Homotetramer.</text>
</comment>
<comment type="similarity">
    <text evidence="3">Belongs to the lyase 1 family. Argininosuccinate lyase subfamily.</text>
</comment>
<gene>
    <name type="primary">arg7</name>
    <name type="ORF">SPBC1773.14</name>
</gene>
<feature type="chain" id="PRO_0000137725" description="Argininosuccinate lyase">
    <location>
        <begin position="1"/>
        <end position="461"/>
    </location>
</feature>
<feature type="active site" description="Proton acceptor" evidence="2">
    <location>
        <position position="161"/>
    </location>
</feature>
<feature type="active site" description="Proton donor" evidence="2">
    <location>
        <position position="282"/>
    </location>
</feature>
<feature type="binding site" description="in chain A" evidence="2">
    <location>
        <position position="28"/>
    </location>
    <ligand>
        <name>2-(N(omega)-L-arginino)succinate</name>
        <dbReference type="ChEBI" id="CHEBI:57472"/>
        <note>ligand shared between tetrameric partners</note>
    </ligand>
</feature>
<feature type="binding site" description="in chain A" evidence="2">
    <location>
        <position position="115"/>
    </location>
    <ligand>
        <name>2-(N(omega)-L-arginino)succinate</name>
        <dbReference type="ChEBI" id="CHEBI:57472"/>
        <note>ligand shared between tetrameric partners</note>
    </ligand>
</feature>
<feature type="binding site" description="in chain C" evidence="2">
    <location>
        <position position="160"/>
    </location>
    <ligand>
        <name>2-(N(omega)-L-arginino)succinate</name>
        <dbReference type="ChEBI" id="CHEBI:57472"/>
        <note>ligand shared between tetrameric partners</note>
    </ligand>
</feature>
<feature type="binding site" description="in chain B" evidence="2">
    <location>
        <position position="290"/>
    </location>
    <ligand>
        <name>2-(N(omega)-L-arginino)succinate</name>
        <dbReference type="ChEBI" id="CHEBI:57472"/>
        <note>ligand shared between tetrameric partners</note>
    </ligand>
</feature>
<feature type="binding site" description="in chain A" evidence="2">
    <location>
        <position position="322"/>
    </location>
    <ligand>
        <name>2-(N(omega)-L-arginino)succinate</name>
        <dbReference type="ChEBI" id="CHEBI:57472"/>
        <note>ligand shared between tetrameric partners</note>
    </ligand>
</feature>
<feature type="binding site" description="in chain A" evidence="2">
    <location>
        <position position="327"/>
    </location>
    <ligand>
        <name>2-(N(omega)-L-arginino)succinate</name>
        <dbReference type="ChEBI" id="CHEBI:57472"/>
        <note>ligand shared between tetrameric partners</note>
    </ligand>
</feature>
<feature type="binding site" description="in chain A" evidence="2">
    <location>
        <position position="330"/>
    </location>
    <ligand>
        <name>2-(N(omega)-L-arginino)succinate</name>
        <dbReference type="ChEBI" id="CHEBI:57472"/>
        <note>ligand shared between tetrameric partners</note>
    </ligand>
</feature>
<feature type="site" description="Increases basicity of active site His" evidence="2">
    <location>
        <position position="295"/>
    </location>
</feature>
<feature type="sequence conflict" description="In Ref. 1; CAA44915." evidence="3" ref="1">
    <original>PL</original>
    <variation>TA</variation>
    <location>
        <begin position="199"/>
        <end position="200"/>
    </location>
</feature>
<feature type="sequence conflict" description="In Ref. 1; CAA44915." evidence="3" ref="1">
    <original>R</original>
    <variation>P</variation>
    <location>
        <position position="218"/>
    </location>
</feature>
<feature type="sequence conflict" description="In Ref. 1; CAA44915." evidence="3" ref="1">
    <original>F</original>
    <variation>S</variation>
    <location>
        <position position="223"/>
    </location>
</feature>
<feature type="sequence conflict" description="In Ref. 1; CAA44915." evidence="3" ref="1">
    <original>A</original>
    <variation>AS</variation>
    <location>
        <position position="371"/>
    </location>
</feature>
<feature type="sequence conflict" description="In Ref. 1; CAA44915." evidence="3" ref="1">
    <original>EQIEHIRSAIL</original>
    <variation>DNRAYTISNS</variation>
    <location>
        <begin position="451"/>
        <end position="461"/>
    </location>
</feature>
<accession>P40369</accession>
<accession>O94571</accession>
<name>ARLY_SCHPO</name>
<keyword id="KW-0028">Amino-acid biosynthesis</keyword>
<keyword id="KW-0055">Arginine biosynthesis</keyword>
<keyword id="KW-0456">Lyase</keyword>
<keyword id="KW-1185">Reference proteome</keyword>
<dbReference type="EC" id="4.3.2.1" evidence="4"/>
<dbReference type="EMBL" id="X63262">
    <property type="protein sequence ID" value="CAA44915.1"/>
    <property type="molecule type" value="Genomic_DNA"/>
</dbReference>
<dbReference type="EMBL" id="CU329671">
    <property type="protein sequence ID" value="CAA21919.1"/>
    <property type="molecule type" value="Genomic_DNA"/>
</dbReference>
<dbReference type="PIR" id="S32580">
    <property type="entry name" value="S32580"/>
</dbReference>
<dbReference type="PIR" id="T39679">
    <property type="entry name" value="T39679"/>
</dbReference>
<dbReference type="RefSeq" id="NP_595129.1">
    <property type="nucleotide sequence ID" value="NM_001021036.2"/>
</dbReference>
<dbReference type="SMR" id="P40369"/>
<dbReference type="BioGRID" id="276524">
    <property type="interactions" value="10"/>
</dbReference>
<dbReference type="FunCoup" id="P40369">
    <property type="interactions" value="467"/>
</dbReference>
<dbReference type="STRING" id="284812.P40369"/>
<dbReference type="iPTMnet" id="P40369"/>
<dbReference type="SwissPalm" id="P40369"/>
<dbReference type="PaxDb" id="4896-SPBC1773.14.1"/>
<dbReference type="EnsemblFungi" id="SPBC1773.14.1">
    <property type="protein sequence ID" value="SPBC1773.14.1:pep"/>
    <property type="gene ID" value="SPBC1773.14"/>
</dbReference>
<dbReference type="GeneID" id="2539980"/>
<dbReference type="KEGG" id="spo:2539980"/>
<dbReference type="PomBase" id="SPBC1773.14">
    <property type="gene designation" value="arg7"/>
</dbReference>
<dbReference type="VEuPathDB" id="FungiDB:SPBC1773.14"/>
<dbReference type="eggNOG" id="KOG1316">
    <property type="taxonomic scope" value="Eukaryota"/>
</dbReference>
<dbReference type="HOGENOM" id="CLU_027272_2_1_1"/>
<dbReference type="InParanoid" id="P40369"/>
<dbReference type="OMA" id="AGMLWGG"/>
<dbReference type="PhylomeDB" id="P40369"/>
<dbReference type="UniPathway" id="UPA00068">
    <property type="reaction ID" value="UER00114"/>
</dbReference>
<dbReference type="PRO" id="PR:P40369"/>
<dbReference type="Proteomes" id="UP000002485">
    <property type="component" value="Chromosome II"/>
</dbReference>
<dbReference type="GO" id="GO:0005829">
    <property type="term" value="C:cytosol"/>
    <property type="evidence" value="ECO:0007005"/>
    <property type="project" value="PomBase"/>
</dbReference>
<dbReference type="GO" id="GO:0004056">
    <property type="term" value="F:argininosuccinate lyase activity"/>
    <property type="evidence" value="ECO:0000315"/>
    <property type="project" value="PomBase"/>
</dbReference>
<dbReference type="GO" id="GO:0042450">
    <property type="term" value="P:arginine biosynthetic process via ornithine"/>
    <property type="evidence" value="ECO:0000318"/>
    <property type="project" value="GO_Central"/>
</dbReference>
<dbReference type="GO" id="GO:0006526">
    <property type="term" value="P:L-arginine biosynthetic process"/>
    <property type="evidence" value="ECO:0000315"/>
    <property type="project" value="PomBase"/>
</dbReference>
<dbReference type="GO" id="GO:0000050">
    <property type="term" value="P:urea cycle"/>
    <property type="evidence" value="ECO:0000305"/>
    <property type="project" value="PomBase"/>
</dbReference>
<dbReference type="CDD" id="cd01359">
    <property type="entry name" value="Argininosuccinate_lyase"/>
    <property type="match status" value="1"/>
</dbReference>
<dbReference type="FunFam" id="1.10.275.10:FF:000002">
    <property type="entry name" value="Argininosuccinate lyase"/>
    <property type="match status" value="1"/>
</dbReference>
<dbReference type="FunFam" id="1.10.40.30:FF:000001">
    <property type="entry name" value="Argininosuccinate lyase"/>
    <property type="match status" value="1"/>
</dbReference>
<dbReference type="FunFam" id="1.20.200.10:FF:000002">
    <property type="entry name" value="Argininosuccinate lyase"/>
    <property type="match status" value="1"/>
</dbReference>
<dbReference type="Gene3D" id="1.10.40.30">
    <property type="entry name" value="Fumarase/aspartase (C-terminal domain)"/>
    <property type="match status" value="1"/>
</dbReference>
<dbReference type="Gene3D" id="1.20.200.10">
    <property type="entry name" value="Fumarase/aspartase (Central domain)"/>
    <property type="match status" value="1"/>
</dbReference>
<dbReference type="Gene3D" id="1.10.275.10">
    <property type="entry name" value="Fumarase/aspartase (N-terminal domain)"/>
    <property type="match status" value="1"/>
</dbReference>
<dbReference type="HAMAP" id="MF_00006">
    <property type="entry name" value="Arg_succ_lyase"/>
    <property type="match status" value="1"/>
</dbReference>
<dbReference type="InterPro" id="IPR029419">
    <property type="entry name" value="Arg_succ_lyase_C"/>
</dbReference>
<dbReference type="InterPro" id="IPR009049">
    <property type="entry name" value="Argininosuccinate_lyase"/>
</dbReference>
<dbReference type="InterPro" id="IPR024083">
    <property type="entry name" value="Fumarase/histidase_N"/>
</dbReference>
<dbReference type="InterPro" id="IPR020557">
    <property type="entry name" value="Fumarate_lyase_CS"/>
</dbReference>
<dbReference type="InterPro" id="IPR000362">
    <property type="entry name" value="Fumarate_lyase_fam"/>
</dbReference>
<dbReference type="InterPro" id="IPR022761">
    <property type="entry name" value="Fumarate_lyase_N"/>
</dbReference>
<dbReference type="InterPro" id="IPR008948">
    <property type="entry name" value="L-Aspartase-like"/>
</dbReference>
<dbReference type="NCBIfam" id="TIGR00838">
    <property type="entry name" value="argH"/>
    <property type="match status" value="1"/>
</dbReference>
<dbReference type="PANTHER" id="PTHR43814">
    <property type="entry name" value="ARGININOSUCCINATE LYASE"/>
    <property type="match status" value="1"/>
</dbReference>
<dbReference type="PANTHER" id="PTHR43814:SF1">
    <property type="entry name" value="ARGININOSUCCINATE LYASE"/>
    <property type="match status" value="1"/>
</dbReference>
<dbReference type="Pfam" id="PF14698">
    <property type="entry name" value="ASL_C2"/>
    <property type="match status" value="1"/>
</dbReference>
<dbReference type="Pfam" id="PF00206">
    <property type="entry name" value="Lyase_1"/>
    <property type="match status" value="1"/>
</dbReference>
<dbReference type="PRINTS" id="PR00145">
    <property type="entry name" value="ARGSUCLYASE"/>
</dbReference>
<dbReference type="PRINTS" id="PR00149">
    <property type="entry name" value="FUMRATELYASE"/>
</dbReference>
<dbReference type="SUPFAM" id="SSF48557">
    <property type="entry name" value="L-aspartase-like"/>
    <property type="match status" value="1"/>
</dbReference>
<dbReference type="PROSITE" id="PS00163">
    <property type="entry name" value="FUMARATE_LYASES"/>
    <property type="match status" value="1"/>
</dbReference>
<proteinExistence type="evidence at protein level"/>
<organism>
    <name type="scientific">Schizosaccharomyces pombe (strain 972 / ATCC 24843)</name>
    <name type="common">Fission yeast</name>
    <dbReference type="NCBI Taxonomy" id="284812"/>
    <lineage>
        <taxon>Eukaryota</taxon>
        <taxon>Fungi</taxon>
        <taxon>Dikarya</taxon>
        <taxon>Ascomycota</taxon>
        <taxon>Taphrinomycotina</taxon>
        <taxon>Schizosaccharomycetes</taxon>
        <taxon>Schizosaccharomycetales</taxon>
        <taxon>Schizosaccharomycetaceae</taxon>
        <taxon>Schizosaccharomyces</taxon>
    </lineage>
</organism>
<sequence>MAEKSSKKLWGGRFSGATDPLMAEFNKSIYSGKEMCEEDVIGSMAYAKALCQKNVISEEELNSILKGLEQIQREWNSGQFVLEPSDEDVHTANERRLTEIIGDVAGKLHTGRSRNDQVTTDLRLWLCRKIKEVEVYVINLLKVFTNRAEMEIDVIMSGYTHLQRAQPVRWSHFLMSHALPLLGDLGRLRQLYTRVSQLPLGAGALAGNPFNVDREFLRKELGFEGIIMNSMNAVGDRDFVIEFMFWAGMVMLHISRFAEDLIIYSSSEFGFVTLSDAYSTGSSIMPQKKNPDSLELLRGKSGRVLGDMIGLMITVKGTPTTYNKDLQEDKEPLFDAFKTVSDSLQILTGVVSTLTINPTKIAESLTPDLLATDLAEYLVRKGLPFRQTHHISGSAVRMAEERNTTLDKLSVSDLQSLHPLFDEDVSKVFNYEESVEKRCSIGGTAKHCVQEQIEHIRSAIL</sequence>